<proteinExistence type="inferred from homology"/>
<sequence>MKGIIFVIDGMGDRPVKELGDKTPLENARTPAMDKMVEEGITGIMDTIRPGVRPGSDTAHLTLLGYDPYEVYTGRGPFEAAGINVEVKPGDIAFRCNFSTADENLIITDRRAGRIQSGTDKLAEVINNEVKLDDVEVIFKESDGHRGVLVLRGNGLSDKITDADPKHEGNKPKTVKPLDDSEEAKFTADIVNKFVEQSYELLKDHPVNIERIENGENPANIILPRGVGAVPHVTPFEELYGLKGVCVAETGLIKGIAKIAGMDTIDIPGATGGIDTDIDSVHKYIVDTIKSNKYDFILVNVDGADEAGHDGDIFGKRDFIEKVDNIMADLKDMDDIVLFVTADHSTPVSVKDHSGDPVPVFIKAPGLRVDDVKEYGERAAAKGGLCRIRGTDVLYIIRDLMNVTQKFGA</sequence>
<protein>
    <recommendedName>
        <fullName evidence="1">2,3-bisphosphoglycerate-independent phosphoglycerate mutase</fullName>
        <shortName evidence="1">BPG-independent PGAM</shortName>
        <shortName evidence="1">Phosphoglyceromutase</shortName>
        <shortName evidence="1">aPGAM</shortName>
        <ecNumber evidence="1">5.4.2.12</ecNumber>
    </recommendedName>
</protein>
<comment type="function">
    <text evidence="1">Catalyzes the interconversion of 2-phosphoglycerate and 3-phosphoglycerate.</text>
</comment>
<comment type="catalytic activity">
    <reaction evidence="1">
        <text>(2R)-2-phosphoglycerate = (2R)-3-phosphoglycerate</text>
        <dbReference type="Rhea" id="RHEA:15901"/>
        <dbReference type="ChEBI" id="CHEBI:58272"/>
        <dbReference type="ChEBI" id="CHEBI:58289"/>
        <dbReference type="EC" id="5.4.2.12"/>
    </reaction>
</comment>
<comment type="pathway">
    <text evidence="1">Carbohydrate degradation; glycolysis; pyruvate from D-glyceraldehyde 3-phosphate: step 3/5.</text>
</comment>
<comment type="similarity">
    <text evidence="1">Belongs to the BPG-independent phosphoglycerate mutase family. A-PGAM subfamily.</text>
</comment>
<dbReference type="EC" id="5.4.2.12" evidence="1"/>
<dbReference type="EMBL" id="CP000102">
    <property type="protein sequence ID" value="ABC57676.1"/>
    <property type="molecule type" value="Genomic_DNA"/>
</dbReference>
<dbReference type="RefSeq" id="WP_011406875.1">
    <property type="nucleotide sequence ID" value="NC_007681.1"/>
</dbReference>
<dbReference type="SMR" id="Q2NES7"/>
<dbReference type="STRING" id="339860.Msp_1299"/>
<dbReference type="KEGG" id="mst:Msp_1299"/>
<dbReference type="eggNOG" id="arCOG01696">
    <property type="taxonomic scope" value="Archaea"/>
</dbReference>
<dbReference type="HOGENOM" id="CLU_034906_2_0_2"/>
<dbReference type="OrthoDB" id="52918at2157"/>
<dbReference type="UniPathway" id="UPA00109">
    <property type="reaction ID" value="UER00186"/>
</dbReference>
<dbReference type="Proteomes" id="UP000001931">
    <property type="component" value="Chromosome"/>
</dbReference>
<dbReference type="GO" id="GO:0046872">
    <property type="term" value="F:metal ion binding"/>
    <property type="evidence" value="ECO:0007669"/>
    <property type="project" value="InterPro"/>
</dbReference>
<dbReference type="GO" id="GO:0004619">
    <property type="term" value="F:phosphoglycerate mutase activity"/>
    <property type="evidence" value="ECO:0007669"/>
    <property type="project" value="UniProtKB-EC"/>
</dbReference>
<dbReference type="GO" id="GO:0006096">
    <property type="term" value="P:glycolytic process"/>
    <property type="evidence" value="ECO:0007669"/>
    <property type="project" value="UniProtKB-UniRule"/>
</dbReference>
<dbReference type="CDD" id="cd16011">
    <property type="entry name" value="iPGM_like"/>
    <property type="match status" value="1"/>
</dbReference>
<dbReference type="Gene3D" id="3.40.720.10">
    <property type="entry name" value="Alkaline Phosphatase, subunit A"/>
    <property type="match status" value="2"/>
</dbReference>
<dbReference type="HAMAP" id="MF_01402_A">
    <property type="entry name" value="ApgM_A"/>
    <property type="match status" value="1"/>
</dbReference>
<dbReference type="InterPro" id="IPR017850">
    <property type="entry name" value="Alkaline_phosphatase_core_sf"/>
</dbReference>
<dbReference type="InterPro" id="IPR023665">
    <property type="entry name" value="ApgAM_prokaryotes"/>
</dbReference>
<dbReference type="InterPro" id="IPR006124">
    <property type="entry name" value="Metalloenzyme"/>
</dbReference>
<dbReference type="InterPro" id="IPR004456">
    <property type="entry name" value="Pglycerate_mutase_ApgM"/>
</dbReference>
<dbReference type="NCBIfam" id="TIGR00306">
    <property type="entry name" value="apgM"/>
    <property type="match status" value="1"/>
</dbReference>
<dbReference type="NCBIfam" id="NF003104">
    <property type="entry name" value="PRK04024.1"/>
    <property type="match status" value="1"/>
</dbReference>
<dbReference type="PANTHER" id="PTHR31209">
    <property type="entry name" value="COFACTOR-INDEPENDENT PHOSPHOGLYCERATE MUTASE"/>
    <property type="match status" value="1"/>
</dbReference>
<dbReference type="PANTHER" id="PTHR31209:SF0">
    <property type="entry name" value="METALLOENZYME DOMAIN-CONTAINING PROTEIN"/>
    <property type="match status" value="1"/>
</dbReference>
<dbReference type="Pfam" id="PF01676">
    <property type="entry name" value="Metalloenzyme"/>
    <property type="match status" value="1"/>
</dbReference>
<dbReference type="Pfam" id="PF10143">
    <property type="entry name" value="PhosphMutase"/>
    <property type="match status" value="1"/>
</dbReference>
<dbReference type="PIRSF" id="PIRSF006392">
    <property type="entry name" value="IPGAM_arch"/>
    <property type="match status" value="1"/>
</dbReference>
<dbReference type="SUPFAM" id="SSF53649">
    <property type="entry name" value="Alkaline phosphatase-like"/>
    <property type="match status" value="1"/>
</dbReference>
<organism>
    <name type="scientific">Methanosphaera stadtmanae (strain ATCC 43021 / DSM 3091 / JCM 11832 / MCB-3)</name>
    <dbReference type="NCBI Taxonomy" id="339860"/>
    <lineage>
        <taxon>Archaea</taxon>
        <taxon>Methanobacteriati</taxon>
        <taxon>Methanobacteriota</taxon>
        <taxon>Methanomada group</taxon>
        <taxon>Methanobacteria</taxon>
        <taxon>Methanobacteriales</taxon>
        <taxon>Methanobacteriaceae</taxon>
        <taxon>Methanosphaera</taxon>
    </lineage>
</organism>
<feature type="chain" id="PRO_1000087366" description="2,3-bisphosphoglycerate-independent phosphoglycerate mutase">
    <location>
        <begin position="1"/>
        <end position="409"/>
    </location>
</feature>
<feature type="region of interest" description="Disordered" evidence="2">
    <location>
        <begin position="160"/>
        <end position="179"/>
    </location>
</feature>
<keyword id="KW-0324">Glycolysis</keyword>
<keyword id="KW-0413">Isomerase</keyword>
<keyword id="KW-1185">Reference proteome</keyword>
<evidence type="ECO:0000255" key="1">
    <source>
        <dbReference type="HAMAP-Rule" id="MF_01402"/>
    </source>
</evidence>
<evidence type="ECO:0000256" key="2">
    <source>
        <dbReference type="SAM" id="MobiDB-lite"/>
    </source>
</evidence>
<accession>Q2NES7</accession>
<name>APGM_METST</name>
<reference key="1">
    <citation type="journal article" date="2006" name="J. Bacteriol.">
        <title>The genome sequence of Methanosphaera stadtmanae reveals why this human intestinal archaeon is restricted to methanol and H2 for methane formation and ATP synthesis.</title>
        <authorList>
            <person name="Fricke W.F."/>
            <person name="Seedorf H."/>
            <person name="Henne A."/>
            <person name="Kruer M."/>
            <person name="Liesegang H."/>
            <person name="Hedderich R."/>
            <person name="Gottschalk G."/>
            <person name="Thauer R.K."/>
        </authorList>
    </citation>
    <scope>NUCLEOTIDE SEQUENCE [LARGE SCALE GENOMIC DNA]</scope>
    <source>
        <strain>ATCC 43021 / DSM 3091 / JCM 11832 / MCB-3</strain>
    </source>
</reference>
<gene>
    <name evidence="1" type="primary">apgM</name>
    <name type="ordered locus">Msp_1299</name>
</gene>